<keyword id="KW-0256">Endoplasmic reticulum</keyword>
<keyword id="KW-0444">Lipid biosynthesis</keyword>
<keyword id="KW-0443">Lipid metabolism</keyword>
<keyword id="KW-0472">Membrane</keyword>
<keyword id="KW-0735">Signal-anchor</keyword>
<keyword id="KW-0812">Transmembrane</keyword>
<keyword id="KW-1133">Transmembrane helix</keyword>
<gene>
    <name type="primary">LIP1</name>
    <name type="ORF">SCY_4480</name>
</gene>
<feature type="chain" id="PRO_0000308781" description="Ceramide synthase subunit LIP1">
    <location>
        <begin position="1"/>
        <end position="150"/>
    </location>
</feature>
<feature type="topological domain" description="Cytoplasmic" evidence="1">
    <location>
        <begin position="1"/>
        <end position="20"/>
    </location>
</feature>
<feature type="transmembrane region" description="Helical; Signal-anchor for type II membrane protein" evidence="2">
    <location>
        <begin position="21"/>
        <end position="40"/>
    </location>
</feature>
<feature type="topological domain" description="Lumenal" evidence="1">
    <location>
        <begin position="41"/>
        <end position="150"/>
    </location>
</feature>
<organism>
    <name type="scientific">Saccharomyces cerevisiae (strain YJM789)</name>
    <name type="common">Baker's yeast</name>
    <dbReference type="NCBI Taxonomy" id="307796"/>
    <lineage>
        <taxon>Eukaryota</taxon>
        <taxon>Fungi</taxon>
        <taxon>Dikarya</taxon>
        <taxon>Ascomycota</taxon>
        <taxon>Saccharomycotina</taxon>
        <taxon>Saccharomycetes</taxon>
        <taxon>Saccharomycetales</taxon>
        <taxon>Saccharomycetaceae</taxon>
        <taxon>Saccharomyces</taxon>
    </lineage>
</organism>
<sequence length="150" mass="17207">MSQPTPIITTKSAAKPKPKIFNLFRVCFISLLLIAAVEYFKYGTRINYEWFHCTPIKEPQSGSVIKLWARGGPSCDKRGEYKTIVKRITRDYEPNDEHLSFCIIENDNVPPVHYPIHEDKGEPGYVAYVGYDTDSELVQELCADSTIYHM</sequence>
<reference key="1">
    <citation type="journal article" date="2007" name="Proc. Natl. Acad. Sci. U.S.A.">
        <title>Genome sequencing and comparative analysis of Saccharomyces cerevisiae strain YJM789.</title>
        <authorList>
            <person name="Wei W."/>
            <person name="McCusker J.H."/>
            <person name="Hyman R.W."/>
            <person name="Jones T."/>
            <person name="Ning Y."/>
            <person name="Cao Z."/>
            <person name="Gu Z."/>
            <person name="Bruno D."/>
            <person name="Miranda M."/>
            <person name="Nguyen M."/>
            <person name="Wilhelmy J."/>
            <person name="Komp C."/>
            <person name="Tamse R."/>
            <person name="Wang X."/>
            <person name="Jia P."/>
            <person name="Luedi P."/>
            <person name="Oefner P.J."/>
            <person name="David L."/>
            <person name="Dietrich F.S."/>
            <person name="Li Y."/>
            <person name="Davis R.W."/>
            <person name="Steinmetz L.M."/>
        </authorList>
    </citation>
    <scope>NUCLEOTIDE SEQUENCE [LARGE SCALE GENOMIC DNA]</scope>
    <source>
        <strain>YJM789</strain>
    </source>
</reference>
<dbReference type="EMBL" id="AAFW02000021">
    <property type="protein sequence ID" value="EDN64238.1"/>
    <property type="molecule type" value="Genomic_DNA"/>
</dbReference>
<dbReference type="SMR" id="A6ZN14"/>
<dbReference type="HOGENOM" id="CLU_1759093_0_0_1"/>
<dbReference type="Proteomes" id="UP000007060">
    <property type="component" value="Unassembled WGS sequence"/>
</dbReference>
<dbReference type="GO" id="GO:0005789">
    <property type="term" value="C:endoplasmic reticulum membrane"/>
    <property type="evidence" value="ECO:0007669"/>
    <property type="project" value="UniProtKB-SubCell"/>
</dbReference>
<dbReference type="GO" id="GO:0006629">
    <property type="term" value="P:lipid metabolic process"/>
    <property type="evidence" value="ECO:0007669"/>
    <property type="project" value="UniProtKB-KW"/>
</dbReference>
<dbReference type="CDD" id="cd24143">
    <property type="entry name" value="LIP1-like"/>
    <property type="match status" value="1"/>
</dbReference>
<proteinExistence type="inferred from homology"/>
<comment type="function">
    <text evidence="1">Component of the ceramide synthase complex required for synthesis of ceramides.</text>
</comment>
<comment type="subunit">
    <text evidence="1">Component of the ceramide synthase complex composed of at least LAC1, LAG1 and LIP1.</text>
</comment>
<comment type="subcellular location">
    <subcellularLocation>
        <location evidence="1">Endoplasmic reticulum membrane</location>
        <topology evidence="1">Single-pass type II membrane protein</topology>
    </subcellularLocation>
</comment>
<comment type="similarity">
    <text evidence="3">Belongs to the LIP1 family.</text>
</comment>
<name>LIP1_YEAS7</name>
<protein>
    <recommendedName>
        <fullName>Ceramide synthase subunit LIP1</fullName>
    </recommendedName>
</protein>
<evidence type="ECO:0000250" key="1"/>
<evidence type="ECO:0000255" key="2"/>
<evidence type="ECO:0000305" key="3"/>
<accession>A6ZN14</accession>